<reference key="1">
    <citation type="journal article" date="1998" name="DNA Res.">
        <title>Complete sequence and gene organization of the genome of a hyper-thermophilic archaebacterium, Pyrococcus horikoshii OT3.</title>
        <authorList>
            <person name="Kawarabayasi Y."/>
            <person name="Sawada M."/>
            <person name="Horikawa H."/>
            <person name="Haikawa Y."/>
            <person name="Hino Y."/>
            <person name="Yamamoto S."/>
            <person name="Sekine M."/>
            <person name="Baba S."/>
            <person name="Kosugi H."/>
            <person name="Hosoyama A."/>
            <person name="Nagai Y."/>
            <person name="Sakai M."/>
            <person name="Ogura K."/>
            <person name="Otsuka R."/>
            <person name="Nakazawa H."/>
            <person name="Takamiya M."/>
            <person name="Ohfuku Y."/>
            <person name="Funahashi T."/>
            <person name="Tanaka T."/>
            <person name="Kudoh Y."/>
            <person name="Yamazaki J."/>
            <person name="Kushida N."/>
            <person name="Oguchi A."/>
            <person name="Aoki K."/>
            <person name="Yoshizawa T."/>
            <person name="Nakamura Y."/>
            <person name="Robb F.T."/>
            <person name="Horikoshi K."/>
            <person name="Masuchi Y."/>
            <person name="Shizuya H."/>
            <person name="Kikuchi H."/>
        </authorList>
    </citation>
    <scope>NUCLEOTIDE SEQUENCE [LARGE SCALE GENOMIC DNA]</scope>
    <source>
        <strain>ATCC 700860 / DSM 12428 / JCM 9974 / NBRC 100139 / OT-3</strain>
    </source>
</reference>
<proteinExistence type="inferred from homology"/>
<feature type="chain" id="PRO_0000129084" description="Hydrogenase maturation factor HypA">
    <location>
        <begin position="1"/>
        <end position="139"/>
    </location>
</feature>
<feature type="binding site" evidence="1">
    <location>
        <position position="2"/>
    </location>
    <ligand>
        <name>Ni(2+)</name>
        <dbReference type="ChEBI" id="CHEBI:49786"/>
    </ligand>
</feature>
<feature type="binding site" evidence="1">
    <location>
        <position position="73"/>
    </location>
    <ligand>
        <name>Zn(2+)</name>
        <dbReference type="ChEBI" id="CHEBI:29105"/>
    </ligand>
</feature>
<feature type="binding site" evidence="1">
    <location>
        <position position="76"/>
    </location>
    <ligand>
        <name>Zn(2+)</name>
        <dbReference type="ChEBI" id="CHEBI:29105"/>
    </ligand>
</feature>
<feature type="binding site" evidence="1">
    <location>
        <position position="110"/>
    </location>
    <ligand>
        <name>Zn(2+)</name>
        <dbReference type="ChEBI" id="CHEBI:29105"/>
    </ligand>
</feature>
<feature type="binding site" evidence="1">
    <location>
        <position position="113"/>
    </location>
    <ligand>
        <name>Zn(2+)</name>
        <dbReference type="ChEBI" id="CHEBI:29105"/>
    </ligand>
</feature>
<evidence type="ECO:0000255" key="1">
    <source>
        <dbReference type="HAMAP-Rule" id="MF_00213"/>
    </source>
</evidence>
<evidence type="ECO:0000305" key="2"/>
<dbReference type="EMBL" id="BA000001">
    <property type="protein sequence ID" value="BAA30693.1"/>
    <property type="molecule type" value="Genomic_DNA"/>
</dbReference>
<dbReference type="PIR" id="E71036">
    <property type="entry name" value="E71036"/>
</dbReference>
<dbReference type="RefSeq" id="WP_048053432.1">
    <property type="nucleotide sequence ID" value="NC_000961.1"/>
</dbReference>
<dbReference type="SMR" id="O59267"/>
<dbReference type="STRING" id="70601.gene:9378571"/>
<dbReference type="EnsemblBacteria" id="BAA30693">
    <property type="protein sequence ID" value="BAA30693"/>
    <property type="gene ID" value="BAA30693"/>
</dbReference>
<dbReference type="GeneID" id="1443895"/>
<dbReference type="KEGG" id="pho:PH1581"/>
<dbReference type="eggNOG" id="arCOG04426">
    <property type="taxonomic scope" value="Archaea"/>
</dbReference>
<dbReference type="OrthoDB" id="36835at2157"/>
<dbReference type="Proteomes" id="UP000000752">
    <property type="component" value="Chromosome"/>
</dbReference>
<dbReference type="GO" id="GO:0016151">
    <property type="term" value="F:nickel cation binding"/>
    <property type="evidence" value="ECO:0007669"/>
    <property type="project" value="UniProtKB-UniRule"/>
</dbReference>
<dbReference type="GO" id="GO:0008270">
    <property type="term" value="F:zinc ion binding"/>
    <property type="evidence" value="ECO:0007669"/>
    <property type="project" value="UniProtKB-UniRule"/>
</dbReference>
<dbReference type="GO" id="GO:0051604">
    <property type="term" value="P:protein maturation"/>
    <property type="evidence" value="ECO:0007669"/>
    <property type="project" value="InterPro"/>
</dbReference>
<dbReference type="GO" id="GO:0036211">
    <property type="term" value="P:protein modification process"/>
    <property type="evidence" value="ECO:0007669"/>
    <property type="project" value="UniProtKB-UniRule"/>
</dbReference>
<dbReference type="FunFam" id="3.30.2320.80:FF:000004">
    <property type="entry name" value="Hydrogenase maturation factor HypA"/>
    <property type="match status" value="1"/>
</dbReference>
<dbReference type="Gene3D" id="3.30.2320.80">
    <property type="match status" value="1"/>
</dbReference>
<dbReference type="HAMAP" id="MF_00213">
    <property type="entry name" value="HypA_HybF"/>
    <property type="match status" value="1"/>
</dbReference>
<dbReference type="InterPro" id="IPR020538">
    <property type="entry name" value="Hydgase_Ni_incorp_HypA/HybF_CS"/>
</dbReference>
<dbReference type="InterPro" id="IPR000688">
    <property type="entry name" value="HypA/HybF"/>
</dbReference>
<dbReference type="NCBIfam" id="NF003008">
    <property type="entry name" value="PRK03824.1"/>
    <property type="match status" value="1"/>
</dbReference>
<dbReference type="PANTHER" id="PTHR34535">
    <property type="entry name" value="HYDROGENASE MATURATION FACTOR HYPA"/>
    <property type="match status" value="1"/>
</dbReference>
<dbReference type="PANTHER" id="PTHR34535:SF3">
    <property type="entry name" value="HYDROGENASE MATURATION FACTOR HYPA"/>
    <property type="match status" value="1"/>
</dbReference>
<dbReference type="Pfam" id="PF01155">
    <property type="entry name" value="HypA"/>
    <property type="match status" value="1"/>
</dbReference>
<dbReference type="PIRSF" id="PIRSF004761">
    <property type="entry name" value="Hydrgn_mat_HypA"/>
    <property type="match status" value="1"/>
</dbReference>
<dbReference type="PROSITE" id="PS01249">
    <property type="entry name" value="HYPA"/>
    <property type="match status" value="1"/>
</dbReference>
<organism>
    <name type="scientific">Pyrococcus horikoshii (strain ATCC 700860 / DSM 12428 / JCM 9974 / NBRC 100139 / OT-3)</name>
    <dbReference type="NCBI Taxonomy" id="70601"/>
    <lineage>
        <taxon>Archaea</taxon>
        <taxon>Methanobacteriati</taxon>
        <taxon>Methanobacteriota</taxon>
        <taxon>Thermococci</taxon>
        <taxon>Thermococcales</taxon>
        <taxon>Thermococcaceae</taxon>
        <taxon>Pyrococcus</taxon>
    </lineage>
</organism>
<protein>
    <recommendedName>
        <fullName evidence="1">Hydrogenase maturation factor HypA</fullName>
    </recommendedName>
</protein>
<keyword id="KW-0479">Metal-binding</keyword>
<keyword id="KW-0533">Nickel</keyword>
<keyword id="KW-0862">Zinc</keyword>
<gene>
    <name evidence="1" type="primary">hypA</name>
    <name type="ordered locus">PH1581</name>
</gene>
<name>HYPA_PYRHO</name>
<accession>O59267</accession>
<sequence>MHEWALADAIVRTVLEHAQKENASKVLAVKVVLGELQDVDAKIVEFAMNELFKGTIAEGAEIIFEEEEAVFKCRNCGYEWRLSEVREKLDERMREDIHFIPEVVHAFLSCPRCGSHDFEVVKGRGVYIAGIKIEKEGEQ</sequence>
<comment type="function">
    <text evidence="1">Involved in the maturation of [NiFe] hydrogenases. Required for nickel insertion into the metal center of the hydrogenase.</text>
</comment>
<comment type="similarity">
    <text evidence="1 2">Belongs to the HypA/HybF family.</text>
</comment>